<sequence>MAVSRRRGPQAGAQSFFCALLLSFSQFVGSDGMGGDAAAPGAAGTQAELPHRRFEYKYSFKGPHLVQSDGTVPFWAHAGNAIPSADQIRIAPSLKSQRGSVWTKTKAAFENWEVEVTFRVTGRGRIGADGLAIWYTENQGLDGPVFGSADMWNGVGIFFDSFDNDGKKNNPAIVVVGNNGQINYDHQNDGATQALASCQRDFRNKPYPVRAKITYYQKTLTVMINNGFTPDKNDYEFCAKVENMVIPTQGHFGISAATGGLADDHDVLSFLTFQLTEPGKEPPTPEKDISEKEKEKYQEEFEHFQQELDKKKEEFQKGHPDLQGQPADDIFESIGDRELRQVFEGQNRIHLEIKQLNRQLDMILDEQRRYVSSLTEEISRRGAGTPGQPGQVSQQELDTVVRTQLEILRQVNEMKNSMRETMRLVSGVQHPGSAGVYETTQHFMDIKEHLHIVKRDIDSLAQRSMSSNEKPKCPDLPAFPSCLSTVHFVIFIVVQTVLFIGYIMYRTQQEAAAKKFF</sequence>
<comment type="function">
    <text evidence="1">Mannose-specific lectin. May recognize sugar residues of glycoproteins, glycolipids, or glycosylphosphatidyl inositol anchors and may be involved in the sorting or recycling of proteins, lipids, or both. The LMAN1-MCFD2 complex forms a specific cargo receptor for the ER-to-Golgi transport of selected proteins (By similarity).</text>
</comment>
<comment type="subunit">
    <text evidence="2">Exists both as a covalent disulfide-linked homohexamer, and a complex of three disulfide-linked dimers non-covalently kept together. Interacts with MCFD2. May interact with TMEM115. Interacts with RAB3GAP1 and RAB3GAP2. Interacts with UBXN6. Interacts with SERPINA1/alpha1-antitrypsin (By similarity). Interacts with BET1 (By similarity).</text>
</comment>
<comment type="subcellular location">
    <subcellularLocation>
        <location evidence="1">Endoplasmic reticulum-Golgi intermediate compartment membrane</location>
        <topology evidence="1">Single-pass type I membrane protein</topology>
    </subcellularLocation>
    <subcellularLocation>
        <location evidence="1">Golgi apparatus membrane</location>
        <topology evidence="1">Single-pass membrane protein</topology>
    </subcellularLocation>
    <subcellularLocation>
        <location evidence="1">Endoplasmic reticulum membrane</location>
        <topology evidence="1">Single-pass membrane protein</topology>
    </subcellularLocation>
</comment>
<comment type="domain">
    <text evidence="1">The FF ER export motif at the C-terminus is not sufficient to support endoplasmic reticulum exit, and needs assistance of Gln-508 for proper recognition of COPII coat components.</text>
</comment>
<accession>Q62902</accession>
<dbReference type="EMBL" id="U44129">
    <property type="protein sequence ID" value="AAC52434.1"/>
    <property type="molecule type" value="mRNA"/>
</dbReference>
<dbReference type="RefSeq" id="NP_446338.1">
    <property type="nucleotide sequence ID" value="NM_053886.2"/>
</dbReference>
<dbReference type="PDB" id="1GV9">
    <property type="method" value="X-ray"/>
    <property type="resolution" value="1.46 A"/>
    <property type="chains" value="A=25-284"/>
</dbReference>
<dbReference type="PDB" id="1R1Z">
    <property type="method" value="X-ray"/>
    <property type="resolution" value="2.40 A"/>
    <property type="chains" value="A/B/C/D=43-284"/>
</dbReference>
<dbReference type="PDBsum" id="1GV9"/>
<dbReference type="PDBsum" id="1R1Z"/>
<dbReference type="SMR" id="Q62902"/>
<dbReference type="BioGRID" id="250550">
    <property type="interactions" value="1"/>
</dbReference>
<dbReference type="FunCoup" id="Q62902">
    <property type="interactions" value="2093"/>
</dbReference>
<dbReference type="IntAct" id="Q62902">
    <property type="interactions" value="7"/>
</dbReference>
<dbReference type="MINT" id="Q62902"/>
<dbReference type="STRING" id="10116.ENSRNOP00000035966"/>
<dbReference type="UniLectin" id="Q62902"/>
<dbReference type="GlyGen" id="Q62902">
    <property type="glycosylation" value="1 site"/>
</dbReference>
<dbReference type="iPTMnet" id="Q62902"/>
<dbReference type="PhosphoSitePlus" id="Q62902"/>
<dbReference type="jPOST" id="Q62902"/>
<dbReference type="PaxDb" id="10116-ENSRNOP00000035966"/>
<dbReference type="PeptideAtlas" id="Q62902"/>
<dbReference type="GeneID" id="116666"/>
<dbReference type="KEGG" id="rno:116666"/>
<dbReference type="UCSC" id="RGD:71020">
    <property type="organism name" value="rat"/>
</dbReference>
<dbReference type="AGR" id="RGD:71020"/>
<dbReference type="CTD" id="3998"/>
<dbReference type="RGD" id="71020">
    <property type="gene designation" value="Lman1"/>
</dbReference>
<dbReference type="eggNOG" id="KOG3838">
    <property type="taxonomic scope" value="Eukaryota"/>
</dbReference>
<dbReference type="InParanoid" id="Q62902"/>
<dbReference type="OrthoDB" id="10265193at2759"/>
<dbReference type="PhylomeDB" id="Q62902"/>
<dbReference type="Reactome" id="R-RNO-204005">
    <property type="pathway name" value="COPII-mediated vesicle transport"/>
</dbReference>
<dbReference type="Reactome" id="R-RNO-5694530">
    <property type="pathway name" value="Cargo concentration in the ER"/>
</dbReference>
<dbReference type="Reactome" id="R-RNO-8980692">
    <property type="pathway name" value="RHOA GTPase cycle"/>
</dbReference>
<dbReference type="Reactome" id="R-RNO-9013404">
    <property type="pathway name" value="RAC2 GTPase cycle"/>
</dbReference>
<dbReference type="Reactome" id="R-RNO-9013405">
    <property type="pathway name" value="RHOD GTPase cycle"/>
</dbReference>
<dbReference type="Reactome" id="R-RNO-9013408">
    <property type="pathway name" value="RHOG GTPase cycle"/>
</dbReference>
<dbReference type="EvolutionaryTrace" id="Q62902"/>
<dbReference type="PRO" id="PR:Q62902"/>
<dbReference type="Proteomes" id="UP000002494">
    <property type="component" value="Unplaced"/>
</dbReference>
<dbReference type="GO" id="GO:0030134">
    <property type="term" value="C:COPII-coated ER to Golgi transport vesicle"/>
    <property type="evidence" value="ECO:0000266"/>
    <property type="project" value="RGD"/>
</dbReference>
<dbReference type="GO" id="GO:0005783">
    <property type="term" value="C:endoplasmic reticulum"/>
    <property type="evidence" value="ECO:0000266"/>
    <property type="project" value="RGD"/>
</dbReference>
<dbReference type="GO" id="GO:0005789">
    <property type="term" value="C:endoplasmic reticulum membrane"/>
    <property type="evidence" value="ECO:0000318"/>
    <property type="project" value="GO_Central"/>
</dbReference>
<dbReference type="GO" id="GO:0005793">
    <property type="term" value="C:endoplasmic reticulum-Golgi intermediate compartment"/>
    <property type="evidence" value="ECO:0000314"/>
    <property type="project" value="MGI"/>
</dbReference>
<dbReference type="GO" id="GO:0033116">
    <property type="term" value="C:endoplasmic reticulum-Golgi intermediate compartment membrane"/>
    <property type="evidence" value="ECO:0007669"/>
    <property type="project" value="UniProtKB-SubCell"/>
</dbReference>
<dbReference type="GO" id="GO:0098978">
    <property type="term" value="C:glutamatergic synapse"/>
    <property type="evidence" value="ECO:0000314"/>
    <property type="project" value="SynGO"/>
</dbReference>
<dbReference type="GO" id="GO:0005794">
    <property type="term" value="C:Golgi apparatus"/>
    <property type="evidence" value="ECO:0000266"/>
    <property type="project" value="RGD"/>
</dbReference>
<dbReference type="GO" id="GO:0000139">
    <property type="term" value="C:Golgi membrane"/>
    <property type="evidence" value="ECO:0000318"/>
    <property type="project" value="GO_Central"/>
</dbReference>
<dbReference type="GO" id="GO:0150051">
    <property type="term" value="C:postsynaptic Golgi apparatus"/>
    <property type="evidence" value="ECO:0000314"/>
    <property type="project" value="SynGO"/>
</dbReference>
<dbReference type="GO" id="GO:0030017">
    <property type="term" value="C:sarcomere"/>
    <property type="evidence" value="ECO:0000266"/>
    <property type="project" value="RGD"/>
</dbReference>
<dbReference type="GO" id="GO:0005509">
    <property type="term" value="F:calcium ion binding"/>
    <property type="evidence" value="ECO:0000304"/>
    <property type="project" value="RGD"/>
</dbReference>
<dbReference type="GO" id="GO:0005537">
    <property type="term" value="F:D-mannose binding"/>
    <property type="evidence" value="ECO:0000318"/>
    <property type="project" value="GO_Central"/>
</dbReference>
<dbReference type="GO" id="GO:0042802">
    <property type="term" value="F:identical protein binding"/>
    <property type="evidence" value="ECO:0000314"/>
    <property type="project" value="RGD"/>
</dbReference>
<dbReference type="GO" id="GO:0046872">
    <property type="term" value="F:metal ion binding"/>
    <property type="evidence" value="ECO:0000266"/>
    <property type="project" value="RGD"/>
</dbReference>
<dbReference type="GO" id="GO:0007029">
    <property type="term" value="P:endoplasmic reticulum organization"/>
    <property type="evidence" value="ECO:0000266"/>
    <property type="project" value="RGD"/>
</dbReference>
<dbReference type="GO" id="GO:0006888">
    <property type="term" value="P:endoplasmic reticulum to Golgi vesicle-mediated transport"/>
    <property type="evidence" value="ECO:0000318"/>
    <property type="project" value="GO_Central"/>
</dbReference>
<dbReference type="GO" id="GO:0007030">
    <property type="term" value="P:Golgi organization"/>
    <property type="evidence" value="ECO:0000266"/>
    <property type="project" value="RGD"/>
</dbReference>
<dbReference type="GO" id="GO:0010638">
    <property type="term" value="P:positive regulation of organelle organization"/>
    <property type="evidence" value="ECO:0000266"/>
    <property type="project" value="RGD"/>
</dbReference>
<dbReference type="GO" id="GO:0015031">
    <property type="term" value="P:protein transport"/>
    <property type="evidence" value="ECO:0007669"/>
    <property type="project" value="UniProtKB-KW"/>
</dbReference>
<dbReference type="CDD" id="cd06902">
    <property type="entry name" value="lectin_ERGIC-53_ERGL"/>
    <property type="match status" value="1"/>
</dbReference>
<dbReference type="DisProt" id="DP02789"/>
<dbReference type="FunFam" id="2.60.120.200:FF:000028">
    <property type="entry name" value="Blast:Protein ERGIC-53"/>
    <property type="match status" value="1"/>
</dbReference>
<dbReference type="Gene3D" id="2.60.120.200">
    <property type="match status" value="1"/>
</dbReference>
<dbReference type="InterPro" id="IPR013320">
    <property type="entry name" value="ConA-like_dom_sf"/>
</dbReference>
<dbReference type="InterPro" id="IPR051136">
    <property type="entry name" value="Intracellular_Lectin-GPT"/>
</dbReference>
<dbReference type="InterPro" id="IPR005052">
    <property type="entry name" value="Lectin_leg"/>
</dbReference>
<dbReference type="PANTHER" id="PTHR12223:SF32">
    <property type="entry name" value="PROTEIN ERGIC-53"/>
    <property type="match status" value="1"/>
</dbReference>
<dbReference type="PANTHER" id="PTHR12223">
    <property type="entry name" value="VESICULAR MANNOSE-BINDING LECTIN"/>
    <property type="match status" value="1"/>
</dbReference>
<dbReference type="Pfam" id="PF03388">
    <property type="entry name" value="Lectin_leg-like"/>
    <property type="match status" value="1"/>
</dbReference>
<dbReference type="SUPFAM" id="SSF49899">
    <property type="entry name" value="Concanavalin A-like lectins/glucanases"/>
    <property type="match status" value="1"/>
</dbReference>
<dbReference type="PROSITE" id="PS51328">
    <property type="entry name" value="L_LECTIN_LIKE"/>
    <property type="match status" value="1"/>
</dbReference>
<keyword id="KW-0002">3D-structure</keyword>
<keyword id="KW-1015">Disulfide bond</keyword>
<keyword id="KW-0256">Endoplasmic reticulum</keyword>
<keyword id="KW-0931">ER-Golgi transport</keyword>
<keyword id="KW-0333">Golgi apparatus</keyword>
<keyword id="KW-0430">Lectin</keyword>
<keyword id="KW-0472">Membrane</keyword>
<keyword id="KW-0479">Metal-binding</keyword>
<keyword id="KW-0597">Phosphoprotein</keyword>
<keyword id="KW-0653">Protein transport</keyword>
<keyword id="KW-1185">Reference proteome</keyword>
<keyword id="KW-0732">Signal</keyword>
<keyword id="KW-0812">Transmembrane</keyword>
<keyword id="KW-1133">Transmembrane helix</keyword>
<keyword id="KW-0813">Transport</keyword>
<name>LMAN1_RAT</name>
<gene>
    <name type="primary">Lman1</name>
    <name type="synonym">Ergic53</name>
</gene>
<reference key="1">
    <citation type="journal article" date="1996" name="J. Biol. Chem.">
        <title>Molecular cloning and expression of a 58-kDa cis-Golgi and intermediate compartment protein.</title>
        <authorList>
            <person name="Lahtinen U."/>
            <person name="Hellman U."/>
            <person name="Wernstedt C."/>
            <person name="Saraste J."/>
            <person name="Pettersson R.F."/>
        </authorList>
    </citation>
    <scope>NUCLEOTIDE SEQUENCE [MRNA]</scope>
</reference>
<reference key="2">
    <citation type="journal article" date="2002" name="J. Biol. Chem.">
        <title>Crystal structure of the carbohydrate recognition domain of p58/ERGIC-53, a protein involved in glycoprotein export from the endoplasmic reticulum.</title>
        <authorList>
            <person name="Velloso L.M."/>
            <person name="Svensson K."/>
            <person name="Schneider G."/>
            <person name="Pettersson R.F."/>
            <person name="Lindqvist Y."/>
        </authorList>
    </citation>
    <scope>X-RAY CRYSTALLOGRAPHY (1.46 ANGSTROMS)</scope>
    <scope>DISULFIDE BOND</scope>
</reference>
<reference key="3">
    <citation type="journal article" date="2003" name="J. Mol. Biol.">
        <title>The crystal structure of the carbohydrate-recognition domain of the glycoprotein sorting receptor p58/ERGIC-53 reveals an unpredicted metal-binding site and conformational changes associated with calcium ion binding.</title>
        <authorList>
            <person name="Velloso L.M."/>
            <person name="Svensson K."/>
            <person name="Pettersson R.F."/>
            <person name="Lindqvist Y."/>
        </authorList>
    </citation>
    <scope>X-RAY CRYSTALLOGRAPHY (2.4 ANGSTROMS) OF 43-284 IN COMPLEX WITH CALCIUM IONS</scope>
    <scope>DISULFIDE BOND</scope>
</reference>
<organism>
    <name type="scientific">Rattus norvegicus</name>
    <name type="common">Rat</name>
    <dbReference type="NCBI Taxonomy" id="10116"/>
    <lineage>
        <taxon>Eukaryota</taxon>
        <taxon>Metazoa</taxon>
        <taxon>Chordata</taxon>
        <taxon>Craniata</taxon>
        <taxon>Vertebrata</taxon>
        <taxon>Euteleostomi</taxon>
        <taxon>Mammalia</taxon>
        <taxon>Eutheria</taxon>
        <taxon>Euarchontoglires</taxon>
        <taxon>Glires</taxon>
        <taxon>Rodentia</taxon>
        <taxon>Myomorpha</taxon>
        <taxon>Muroidea</taxon>
        <taxon>Muridae</taxon>
        <taxon>Murinae</taxon>
        <taxon>Rattus</taxon>
    </lineage>
</organism>
<evidence type="ECO:0000250" key="1"/>
<evidence type="ECO:0000250" key="2">
    <source>
        <dbReference type="UniProtKB" id="P49257"/>
    </source>
</evidence>
<evidence type="ECO:0000255" key="3"/>
<evidence type="ECO:0000255" key="4">
    <source>
        <dbReference type="PROSITE-ProRule" id="PRU00658"/>
    </source>
</evidence>
<evidence type="ECO:0000256" key="5">
    <source>
        <dbReference type="SAM" id="MobiDB-lite"/>
    </source>
</evidence>
<evidence type="ECO:0000269" key="6">
    <source>
    </source>
</evidence>
<evidence type="ECO:0000269" key="7">
    <source>
    </source>
</evidence>
<evidence type="ECO:0007829" key="8">
    <source>
        <dbReference type="PDB" id="1GV9"/>
    </source>
</evidence>
<evidence type="ECO:0007829" key="9">
    <source>
        <dbReference type="PDB" id="1R1Z"/>
    </source>
</evidence>
<protein>
    <recommendedName>
        <fullName>Protein ERGIC-53</fullName>
    </recommendedName>
    <alternativeName>
        <fullName>ER-Golgi intermediate compartment 53 kDa protein</fullName>
    </alternativeName>
    <alternativeName>
        <fullName>Lectin mannose-binding 1</fullName>
    </alternativeName>
    <alternativeName>
        <fullName>p58</fullName>
    </alternativeName>
</protein>
<proteinExistence type="evidence at protein level"/>
<feature type="signal peptide" evidence="3">
    <location>
        <begin position="1"/>
        <end position="30"/>
    </location>
</feature>
<feature type="chain" id="PRO_0000017662" description="Protein ERGIC-53">
    <location>
        <begin position="31"/>
        <end position="517"/>
    </location>
</feature>
<feature type="topological domain" description="Lumenal" evidence="3">
    <location>
        <begin position="31"/>
        <end position="484"/>
    </location>
</feature>
<feature type="transmembrane region" description="Helical" evidence="3">
    <location>
        <begin position="485"/>
        <end position="505"/>
    </location>
</feature>
<feature type="topological domain" description="Cytoplasmic" evidence="3">
    <location>
        <begin position="506"/>
        <end position="517"/>
    </location>
</feature>
<feature type="domain" description="L-type lectin-like" evidence="4">
    <location>
        <begin position="52"/>
        <end position="275"/>
    </location>
</feature>
<feature type="region of interest" description="Disordered" evidence="5">
    <location>
        <begin position="276"/>
        <end position="297"/>
    </location>
</feature>
<feature type="region of interest" description="Disordered" evidence="5">
    <location>
        <begin position="377"/>
        <end position="396"/>
    </location>
</feature>
<feature type="region of interest" description="Mediates interaction with RAB3GAP1, RAB3GAP2 and UBXN6" evidence="2">
    <location>
        <begin position="506"/>
        <end position="517"/>
    </location>
</feature>
<feature type="short sequence motif" description="ER export motif" evidence="1">
    <location>
        <begin position="516"/>
        <end position="517"/>
    </location>
</feature>
<feature type="compositionally biased region" description="Basic and acidic residues" evidence="5">
    <location>
        <begin position="278"/>
        <end position="297"/>
    </location>
</feature>
<feature type="binding site" evidence="4">
    <location>
        <position position="96"/>
    </location>
    <ligand>
        <name>a carbohydrate</name>
        <dbReference type="ChEBI" id="CHEBI:16646"/>
    </ligand>
</feature>
<feature type="binding site" evidence="4">
    <location>
        <position position="129"/>
    </location>
    <ligand>
        <name>a carbohydrate</name>
        <dbReference type="ChEBI" id="CHEBI:16646"/>
    </ligand>
</feature>
<feature type="binding site">
    <location>
        <position position="160"/>
    </location>
    <ligand>
        <name>Ca(2+)</name>
        <dbReference type="ChEBI" id="CHEBI:29108"/>
        <label>1</label>
    </ligand>
</feature>
<feature type="binding site">
    <location>
        <position position="162"/>
    </location>
    <ligand>
        <name>Ca(2+)</name>
        <dbReference type="ChEBI" id="CHEBI:29108"/>
        <label>1</label>
    </ligand>
</feature>
<feature type="binding site">
    <location>
        <position position="163"/>
    </location>
    <ligand>
        <name>Ca(2+)</name>
        <dbReference type="ChEBI" id="CHEBI:29108"/>
        <label>2</label>
    </ligand>
</feature>
<feature type="binding site" evidence="4">
    <location>
        <position position="164"/>
    </location>
    <ligand>
        <name>a carbohydrate</name>
        <dbReference type="ChEBI" id="CHEBI:16646"/>
    </ligand>
</feature>
<feature type="binding site">
    <location>
        <position position="164"/>
    </location>
    <ligand>
        <name>Ca(2+)</name>
        <dbReference type="ChEBI" id="CHEBI:29108"/>
        <label>1</label>
    </ligand>
</feature>
<feature type="binding site">
    <location>
        <position position="165"/>
    </location>
    <ligand>
        <name>Ca(2+)</name>
        <dbReference type="ChEBI" id="CHEBI:29108"/>
        <label>2</label>
    </ligand>
</feature>
<feature type="binding site">
    <location>
        <position position="169"/>
    </location>
    <ligand>
        <name>Ca(2+)</name>
        <dbReference type="ChEBI" id="CHEBI:29108"/>
        <label>2</label>
    </ligand>
</feature>
<feature type="binding site">
    <location>
        <position position="170"/>
    </location>
    <ligand>
        <name>Ca(2+)</name>
        <dbReference type="ChEBI" id="CHEBI:29108"/>
        <label>2</label>
    </ligand>
</feature>
<feature type="binding site" evidence="4">
    <location>
        <position position="186"/>
    </location>
    <ligand>
        <name>a carbohydrate</name>
        <dbReference type="ChEBI" id="CHEBI:16646"/>
    </ligand>
</feature>
<feature type="binding site">
    <location>
        <position position="189"/>
    </location>
    <ligand>
        <name>Ca(2+)</name>
        <dbReference type="ChEBI" id="CHEBI:29108"/>
        <label>1</label>
    </ligand>
</feature>
<feature type="binding site">
    <location>
        <position position="189"/>
    </location>
    <ligand>
        <name>Ca(2+)</name>
        <dbReference type="ChEBI" id="CHEBI:29108"/>
        <label>2</label>
    </ligand>
</feature>
<feature type="binding site" evidence="4">
    <location>
        <begin position="259"/>
        <end position="261"/>
    </location>
    <ligand>
        <name>a carbohydrate</name>
        <dbReference type="ChEBI" id="CHEBI:16646"/>
    </ligand>
</feature>
<feature type="site" description="Required for ER export" evidence="1">
    <location>
        <position position="508"/>
    </location>
</feature>
<feature type="modified residue" description="Phosphoserine" evidence="2">
    <location>
        <position position="433"/>
    </location>
</feature>
<feature type="disulfide bond" evidence="4 6 7">
    <location>
        <begin position="198"/>
        <end position="238"/>
    </location>
</feature>
<feature type="disulfide bond" description="Interchain" evidence="4">
    <location>
        <position position="473"/>
    </location>
</feature>
<feature type="disulfide bond" description="Interchain" evidence="4">
    <location>
        <position position="482"/>
    </location>
</feature>
<feature type="helix" evidence="9">
    <location>
        <begin position="43"/>
        <end position="46"/>
    </location>
</feature>
<feature type="strand" evidence="8">
    <location>
        <begin position="51"/>
        <end position="54"/>
    </location>
</feature>
<feature type="helix" evidence="8">
    <location>
        <begin position="56"/>
        <end position="58"/>
    </location>
</feature>
<feature type="strand" evidence="9">
    <location>
        <begin position="60"/>
        <end position="64"/>
    </location>
</feature>
<feature type="strand" evidence="8">
    <location>
        <begin position="75"/>
        <end position="79"/>
    </location>
</feature>
<feature type="strand" evidence="8">
    <location>
        <begin position="88"/>
        <end position="91"/>
    </location>
</feature>
<feature type="strand" evidence="8">
    <location>
        <begin position="98"/>
        <end position="105"/>
    </location>
</feature>
<feature type="strand" evidence="8">
    <location>
        <begin position="110"/>
        <end position="121"/>
    </location>
</feature>
<feature type="strand" evidence="8">
    <location>
        <begin position="123"/>
        <end position="125"/>
    </location>
</feature>
<feature type="strand" evidence="8">
    <location>
        <begin position="130"/>
        <end position="138"/>
    </location>
</feature>
<feature type="strand" evidence="8">
    <location>
        <begin position="153"/>
        <end position="160"/>
    </location>
</feature>
<feature type="strand" evidence="8">
    <location>
        <begin position="172"/>
        <end position="180"/>
    </location>
</feature>
<feature type="helix" evidence="8">
    <location>
        <begin position="186"/>
        <end position="193"/>
    </location>
</feature>
<feature type="strand" evidence="8">
    <location>
        <begin position="195"/>
        <end position="198"/>
    </location>
</feature>
<feature type="strand" evidence="8">
    <location>
        <begin position="209"/>
        <end position="216"/>
    </location>
</feature>
<feature type="strand" evidence="8">
    <location>
        <begin position="219"/>
        <end position="225"/>
    </location>
</feature>
<feature type="strand" evidence="9">
    <location>
        <begin position="227"/>
        <end position="230"/>
    </location>
</feature>
<feature type="strand" evidence="8">
    <location>
        <begin position="236"/>
        <end position="241"/>
    </location>
</feature>
<feature type="strand" evidence="8">
    <location>
        <begin position="248"/>
        <end position="257"/>
    </location>
</feature>
<feature type="strand" evidence="8">
    <location>
        <begin position="264"/>
        <end position="276"/>
    </location>
</feature>